<sequence length="156" mass="17943">MPRKGPVARRDVLPDPIYNSKLVTRLINRIMVDGKRGIAQKILYNAFELVRERSGKDPMEVFDQALKNIMPVLEVKARRVGGANYQVPVEVKPERRTTLGLRWLVNYSRLRGEKTMEERLANEILDAANNTGAAVKKREDTHKMAEANKAFAHYRW</sequence>
<comment type="function">
    <text evidence="1">One of the primary rRNA binding proteins, it binds directly to 16S rRNA where it nucleates assembly of the head domain of the 30S subunit. Is located at the subunit interface close to the decoding center, probably blocks exit of the E-site tRNA.</text>
</comment>
<comment type="subunit">
    <text evidence="1">Part of the 30S ribosomal subunit. Contacts proteins S9 and S11.</text>
</comment>
<comment type="similarity">
    <text evidence="1">Belongs to the universal ribosomal protein uS7 family.</text>
</comment>
<organism>
    <name type="scientific">Halalkalibacterium halodurans (strain ATCC BAA-125 / DSM 18197 / FERM 7344 / JCM 9153 / C-125)</name>
    <name type="common">Bacillus halodurans</name>
    <dbReference type="NCBI Taxonomy" id="272558"/>
    <lineage>
        <taxon>Bacteria</taxon>
        <taxon>Bacillati</taxon>
        <taxon>Bacillota</taxon>
        <taxon>Bacilli</taxon>
        <taxon>Bacillales</taxon>
        <taxon>Bacillaceae</taxon>
        <taxon>Halalkalibacterium (ex Joshi et al. 2022)</taxon>
    </lineage>
</organism>
<gene>
    <name evidence="1" type="primary">rpsG</name>
    <name type="ordered locus">BH0130</name>
</gene>
<reference key="1">
    <citation type="journal article" date="1999" name="Biosci. Biotechnol. Biochem.">
        <title>Sequence analysis of a 32-kb region including the major ribosomal protein gene clusters from alkaliphilic Bacillus sp. strain C-125.</title>
        <authorList>
            <person name="Takami H."/>
            <person name="Takaki Y."/>
            <person name="Nakasone K."/>
            <person name="Hirama C."/>
            <person name="Inoue A."/>
            <person name="Horikoshi K."/>
        </authorList>
    </citation>
    <scope>NUCLEOTIDE SEQUENCE [GENOMIC DNA]</scope>
    <source>
        <strain>ATCC BAA-125 / DSM 18197 / FERM 7344 / JCM 9153 / C-125</strain>
    </source>
</reference>
<reference key="2">
    <citation type="journal article" date="2000" name="Nucleic Acids Res.">
        <title>Complete genome sequence of the alkaliphilic bacterium Bacillus halodurans and genomic sequence comparison with Bacillus subtilis.</title>
        <authorList>
            <person name="Takami H."/>
            <person name="Nakasone K."/>
            <person name="Takaki Y."/>
            <person name="Maeno G."/>
            <person name="Sasaki R."/>
            <person name="Masui N."/>
            <person name="Fuji F."/>
            <person name="Hirama C."/>
            <person name="Nakamura Y."/>
            <person name="Ogasawara N."/>
            <person name="Kuhara S."/>
            <person name="Horikoshi K."/>
        </authorList>
    </citation>
    <scope>NUCLEOTIDE SEQUENCE [LARGE SCALE GENOMIC DNA]</scope>
    <source>
        <strain>ATCC BAA-125 / DSM 18197 / FERM 7344 / JCM 9153 / C-125</strain>
    </source>
</reference>
<dbReference type="EMBL" id="AB017508">
    <property type="protein sequence ID" value="BAA75267.1"/>
    <property type="molecule type" value="Genomic_DNA"/>
</dbReference>
<dbReference type="EMBL" id="BA000004">
    <property type="protein sequence ID" value="BAB03849.1"/>
    <property type="molecule type" value="Genomic_DNA"/>
</dbReference>
<dbReference type="PIR" id="T44379">
    <property type="entry name" value="T44379"/>
</dbReference>
<dbReference type="RefSeq" id="WP_010896313.1">
    <property type="nucleotide sequence ID" value="NC_002570.2"/>
</dbReference>
<dbReference type="SMR" id="Q9Z9L8"/>
<dbReference type="STRING" id="272558.gene:10725970"/>
<dbReference type="GeneID" id="87595671"/>
<dbReference type="KEGG" id="bha:BH0130"/>
<dbReference type="eggNOG" id="COG0049">
    <property type="taxonomic scope" value="Bacteria"/>
</dbReference>
<dbReference type="HOGENOM" id="CLU_072226_1_1_9"/>
<dbReference type="OrthoDB" id="9807653at2"/>
<dbReference type="Proteomes" id="UP000001258">
    <property type="component" value="Chromosome"/>
</dbReference>
<dbReference type="GO" id="GO:0015935">
    <property type="term" value="C:small ribosomal subunit"/>
    <property type="evidence" value="ECO:0007669"/>
    <property type="project" value="InterPro"/>
</dbReference>
<dbReference type="GO" id="GO:0019843">
    <property type="term" value="F:rRNA binding"/>
    <property type="evidence" value="ECO:0007669"/>
    <property type="project" value="UniProtKB-UniRule"/>
</dbReference>
<dbReference type="GO" id="GO:0003735">
    <property type="term" value="F:structural constituent of ribosome"/>
    <property type="evidence" value="ECO:0007669"/>
    <property type="project" value="InterPro"/>
</dbReference>
<dbReference type="GO" id="GO:0000049">
    <property type="term" value="F:tRNA binding"/>
    <property type="evidence" value="ECO:0007669"/>
    <property type="project" value="UniProtKB-UniRule"/>
</dbReference>
<dbReference type="GO" id="GO:0006412">
    <property type="term" value="P:translation"/>
    <property type="evidence" value="ECO:0007669"/>
    <property type="project" value="UniProtKB-UniRule"/>
</dbReference>
<dbReference type="CDD" id="cd14869">
    <property type="entry name" value="uS7_Bacteria"/>
    <property type="match status" value="1"/>
</dbReference>
<dbReference type="FunFam" id="1.10.455.10:FF:000001">
    <property type="entry name" value="30S ribosomal protein S7"/>
    <property type="match status" value="1"/>
</dbReference>
<dbReference type="Gene3D" id="1.10.455.10">
    <property type="entry name" value="Ribosomal protein S7 domain"/>
    <property type="match status" value="1"/>
</dbReference>
<dbReference type="HAMAP" id="MF_00480_B">
    <property type="entry name" value="Ribosomal_uS7_B"/>
    <property type="match status" value="1"/>
</dbReference>
<dbReference type="InterPro" id="IPR000235">
    <property type="entry name" value="Ribosomal_uS7"/>
</dbReference>
<dbReference type="InterPro" id="IPR005717">
    <property type="entry name" value="Ribosomal_uS7_bac/org-type"/>
</dbReference>
<dbReference type="InterPro" id="IPR020606">
    <property type="entry name" value="Ribosomal_uS7_CS"/>
</dbReference>
<dbReference type="InterPro" id="IPR023798">
    <property type="entry name" value="Ribosomal_uS7_dom"/>
</dbReference>
<dbReference type="InterPro" id="IPR036823">
    <property type="entry name" value="Ribosomal_uS7_dom_sf"/>
</dbReference>
<dbReference type="NCBIfam" id="TIGR01029">
    <property type="entry name" value="rpsG_bact"/>
    <property type="match status" value="1"/>
</dbReference>
<dbReference type="PANTHER" id="PTHR11205">
    <property type="entry name" value="RIBOSOMAL PROTEIN S7"/>
    <property type="match status" value="1"/>
</dbReference>
<dbReference type="Pfam" id="PF00177">
    <property type="entry name" value="Ribosomal_S7"/>
    <property type="match status" value="1"/>
</dbReference>
<dbReference type="PIRSF" id="PIRSF002122">
    <property type="entry name" value="RPS7p_RPS7a_RPS5e_RPS7o"/>
    <property type="match status" value="1"/>
</dbReference>
<dbReference type="SUPFAM" id="SSF47973">
    <property type="entry name" value="Ribosomal protein S7"/>
    <property type="match status" value="1"/>
</dbReference>
<dbReference type="PROSITE" id="PS00052">
    <property type="entry name" value="RIBOSOMAL_S7"/>
    <property type="match status" value="1"/>
</dbReference>
<protein>
    <recommendedName>
        <fullName evidence="1">Small ribosomal subunit protein uS7</fullName>
    </recommendedName>
    <alternativeName>
        <fullName evidence="2">30S ribosomal protein S7</fullName>
    </alternativeName>
</protein>
<keyword id="KW-1185">Reference proteome</keyword>
<keyword id="KW-0687">Ribonucleoprotein</keyword>
<keyword id="KW-0689">Ribosomal protein</keyword>
<keyword id="KW-0694">RNA-binding</keyword>
<keyword id="KW-0699">rRNA-binding</keyword>
<keyword id="KW-0820">tRNA-binding</keyword>
<accession>Q9Z9L8</accession>
<accession>Q9JPY9</accession>
<name>RS7_HALH5</name>
<evidence type="ECO:0000255" key="1">
    <source>
        <dbReference type="HAMAP-Rule" id="MF_00480"/>
    </source>
</evidence>
<evidence type="ECO:0000305" key="2"/>
<feature type="chain" id="PRO_0000124215" description="Small ribosomal subunit protein uS7">
    <location>
        <begin position="1"/>
        <end position="156"/>
    </location>
</feature>
<proteinExistence type="inferred from homology"/>